<gene>
    <name evidence="3" type="primary">Snmp1</name>
    <name type="ORF">GE25009</name>
</gene>
<feature type="chain" id="PRO_0000408247" description="Sensory neuron membrane protein 1">
    <location>
        <begin position="1"/>
        <end position="551"/>
    </location>
</feature>
<feature type="topological domain" description="Cytoplasmic" evidence="4">
    <location>
        <begin position="1"/>
        <end position="7"/>
    </location>
</feature>
<feature type="transmembrane region" description="Helical" evidence="4">
    <location>
        <begin position="8"/>
        <end position="28"/>
    </location>
</feature>
<feature type="topological domain" description="Extracellular" evidence="4">
    <location>
        <begin position="29"/>
        <end position="459"/>
    </location>
</feature>
<feature type="transmembrane region" description="Helical" evidence="4">
    <location>
        <begin position="460"/>
        <end position="480"/>
    </location>
</feature>
<feature type="topological domain" description="Cytoplasmic" evidence="4">
    <location>
        <begin position="481"/>
        <end position="551"/>
    </location>
</feature>
<feature type="region of interest" description="Disordered" evidence="5">
    <location>
        <begin position="502"/>
        <end position="551"/>
    </location>
</feature>
<feature type="compositionally biased region" description="Polar residues" evidence="5">
    <location>
        <begin position="514"/>
        <end position="536"/>
    </location>
</feature>
<feature type="glycosylation site" description="N-linked (GlcNAc...) asparagine" evidence="4">
    <location>
        <position position="66"/>
    </location>
</feature>
<feature type="glycosylation site" description="N-linked (GlcNAc...) asparagine" evidence="4">
    <location>
        <position position="213"/>
    </location>
</feature>
<feature type="glycosylation site" description="N-linked (GlcNAc...) asparagine" evidence="4">
    <location>
        <position position="226"/>
    </location>
</feature>
<feature type="glycosylation site" description="N-linked (GlcNAc...) asparagine" evidence="4">
    <location>
        <position position="440"/>
    </location>
</feature>
<feature type="disulfide bond" evidence="2">
    <location>
        <begin position="265"/>
        <end position="330"/>
    </location>
</feature>
<feature type="disulfide bond" evidence="2">
    <location>
        <begin position="294"/>
        <end position="352"/>
    </location>
</feature>
<feature type="disulfide bond" evidence="2">
    <location>
        <begin position="332"/>
        <end position="341"/>
    </location>
</feature>
<name>SNMP1_DROYA</name>
<dbReference type="EMBL" id="CM000160">
    <property type="protein sequence ID" value="EDW96231.1"/>
    <property type="molecule type" value="Genomic_DNA"/>
</dbReference>
<dbReference type="RefSeq" id="XP_002096519.1">
    <property type="nucleotide sequence ID" value="XM_002096483.2"/>
</dbReference>
<dbReference type="SMR" id="B4PQC2"/>
<dbReference type="GlyCosmos" id="B4PQC2">
    <property type="glycosylation" value="4 sites, No reported glycans"/>
</dbReference>
<dbReference type="EnsemblMetazoa" id="FBtr0271527">
    <property type="protein sequence ID" value="FBpp0270019"/>
    <property type="gene ID" value="FBgn0242099"/>
</dbReference>
<dbReference type="GeneID" id="6535903"/>
<dbReference type="KEGG" id="dya:Dyak_GE25009"/>
<dbReference type="CTD" id="42514"/>
<dbReference type="eggNOG" id="KOG3776">
    <property type="taxonomic scope" value="Eukaryota"/>
</dbReference>
<dbReference type="HOGENOM" id="CLU_019853_1_2_1"/>
<dbReference type="OMA" id="QRKSSYH"/>
<dbReference type="OrthoDB" id="10024078at2759"/>
<dbReference type="PhylomeDB" id="B4PQC2"/>
<dbReference type="ChiTaRS" id="Snmp1">
    <property type="organism name" value="fly"/>
</dbReference>
<dbReference type="Proteomes" id="UP000002282">
    <property type="component" value="Chromosome 3R"/>
</dbReference>
<dbReference type="GO" id="GO:0005929">
    <property type="term" value="C:cilium"/>
    <property type="evidence" value="ECO:0007669"/>
    <property type="project" value="EnsemblMetazoa"/>
</dbReference>
<dbReference type="GO" id="GO:0005737">
    <property type="term" value="C:cytoplasm"/>
    <property type="evidence" value="ECO:0007669"/>
    <property type="project" value="TreeGrafter"/>
</dbReference>
<dbReference type="GO" id="GO:0030425">
    <property type="term" value="C:dendrite"/>
    <property type="evidence" value="ECO:0007669"/>
    <property type="project" value="EnsemblMetazoa"/>
</dbReference>
<dbReference type="GO" id="GO:0043025">
    <property type="term" value="C:neuronal cell body"/>
    <property type="evidence" value="ECO:0007669"/>
    <property type="project" value="EnsemblMetazoa"/>
</dbReference>
<dbReference type="GO" id="GO:0005886">
    <property type="term" value="C:plasma membrane"/>
    <property type="evidence" value="ECO:0007669"/>
    <property type="project" value="UniProtKB-SubCell"/>
</dbReference>
<dbReference type="GO" id="GO:0005044">
    <property type="term" value="F:scavenger receptor activity"/>
    <property type="evidence" value="ECO:0007669"/>
    <property type="project" value="TreeGrafter"/>
</dbReference>
<dbReference type="GO" id="GO:0007166">
    <property type="term" value="P:cell surface receptor signaling pathway"/>
    <property type="evidence" value="ECO:0007669"/>
    <property type="project" value="EnsemblMetazoa"/>
</dbReference>
<dbReference type="GO" id="GO:0071444">
    <property type="term" value="P:cellular response to pheromone"/>
    <property type="evidence" value="ECO:0007669"/>
    <property type="project" value="EnsemblMetazoa"/>
</dbReference>
<dbReference type="GO" id="GO:0050911">
    <property type="term" value="P:detection of chemical stimulus involved in sensory perception of smell"/>
    <property type="evidence" value="ECO:0007669"/>
    <property type="project" value="EnsemblMetazoa"/>
</dbReference>
<dbReference type="GO" id="GO:0055088">
    <property type="term" value="P:lipid homeostasis"/>
    <property type="evidence" value="ECO:0007669"/>
    <property type="project" value="EnsemblMetazoa"/>
</dbReference>
<dbReference type="GO" id="GO:0035073">
    <property type="term" value="P:pupariation"/>
    <property type="evidence" value="ECO:0007669"/>
    <property type="project" value="EnsemblMetazoa"/>
</dbReference>
<dbReference type="InterPro" id="IPR002159">
    <property type="entry name" value="CD36_fam"/>
</dbReference>
<dbReference type="PANTHER" id="PTHR11923">
    <property type="entry name" value="SCAVENGER RECEPTOR CLASS B TYPE-1 SR-B1"/>
    <property type="match status" value="1"/>
</dbReference>
<dbReference type="PANTHER" id="PTHR11923:SF69">
    <property type="entry name" value="SENSORY NEURON MEMBRANE PROTEIN 1"/>
    <property type="match status" value="1"/>
</dbReference>
<dbReference type="Pfam" id="PF01130">
    <property type="entry name" value="CD36"/>
    <property type="match status" value="1"/>
</dbReference>
<dbReference type="PRINTS" id="PR01609">
    <property type="entry name" value="CD36FAMILY"/>
</dbReference>
<accession>B4PQC2</accession>
<sequence length="551" mass="62193">MQVPRVKLLMGSGAMFVFAIIYGWVIFPKILKFMISKQVTLKPGSDVRELWSNTPFPLHFYFYVFNVTNPDEVSEGAKPRLQEVGPFVFDEWKDKYDLEDDVVEDTVSFTMRNTFIFNAKETLPLTGEEEIILPHPIMQPGGISVQREKAAMMELVSKGLSIVFPDAKAFLKAKFMDLFFRGINVDCSSEEFAAKALCTVFYTGEVKQAKQVNQTHFLFSFMGQANHSDAGRFTVCRGVKNNKKLGKVVKFADEPEQDIWPDGECNTFVGTDSTVFAPGLKKEDGLWAFTPDLCRSLGAYYQHKSSYHGMPSMRYTLDLGDIRADERLHCFCEDPEDLDTCPPKGTMNLAACVGGPLMASMPHFYLGDPKLIADVDGLNPNERDHAVYIDFELMSGTPFQAAKRLQFNLDMEPVEGIEPMRNLPKLILPMFWVEEGVHLNKTYTNLVKYTLFLGLKINSVLRWSLITFSLVGLMFSAYLFYHKSDSLDITSILKENNKVDDVASTKEPLPPANPKQSTTAHPVQVPNTLIPGTNPATHPAPHLKMEHRERY</sequence>
<reference evidence="7" key="1">
    <citation type="journal article" date="2007" name="Nature">
        <title>Evolution of genes and genomes on the Drosophila phylogeny.</title>
        <authorList>
            <consortium name="Drosophila 12 genomes consortium"/>
        </authorList>
    </citation>
    <scope>NUCLEOTIDE SEQUENCE [LARGE SCALE GENOMIC DNA]</scope>
    <source>
        <strain evidence="7">Tai18E2 / Tucson 14021-0261.01</strain>
    </source>
</reference>
<comment type="function">
    <text evidence="3">Plays an olfactory role that is not restricted to pheromone sensitivity.</text>
</comment>
<comment type="subcellular location">
    <subcellularLocation>
        <location evidence="1">Cell membrane</location>
        <topology evidence="1">Multi-pass membrane protein</topology>
    </subcellularLocation>
</comment>
<comment type="similarity">
    <text evidence="6">Belongs to the CD36 family.</text>
</comment>
<protein>
    <recommendedName>
        <fullName evidence="3">Sensory neuron membrane protein 1</fullName>
    </recommendedName>
</protein>
<organism>
    <name type="scientific">Drosophila yakuba</name>
    <name type="common">Fruit fly</name>
    <dbReference type="NCBI Taxonomy" id="7245"/>
    <lineage>
        <taxon>Eukaryota</taxon>
        <taxon>Metazoa</taxon>
        <taxon>Ecdysozoa</taxon>
        <taxon>Arthropoda</taxon>
        <taxon>Hexapoda</taxon>
        <taxon>Insecta</taxon>
        <taxon>Pterygota</taxon>
        <taxon>Neoptera</taxon>
        <taxon>Endopterygota</taxon>
        <taxon>Diptera</taxon>
        <taxon>Brachycera</taxon>
        <taxon>Muscomorpha</taxon>
        <taxon>Ephydroidea</taxon>
        <taxon>Drosophilidae</taxon>
        <taxon>Drosophila</taxon>
        <taxon>Sophophora</taxon>
    </lineage>
</organism>
<keyword id="KW-1003">Cell membrane</keyword>
<keyword id="KW-1015">Disulfide bond</keyword>
<keyword id="KW-0325">Glycoprotein</keyword>
<keyword id="KW-0472">Membrane</keyword>
<keyword id="KW-0552">Olfaction</keyword>
<keyword id="KW-0675">Receptor</keyword>
<keyword id="KW-0716">Sensory transduction</keyword>
<keyword id="KW-0812">Transmembrane</keyword>
<keyword id="KW-1133">Transmembrane helix</keyword>
<evidence type="ECO:0000250" key="1">
    <source>
        <dbReference type="UniProtKB" id="O02351"/>
    </source>
</evidence>
<evidence type="ECO:0000250" key="2">
    <source>
        <dbReference type="UniProtKB" id="P26201"/>
    </source>
</evidence>
<evidence type="ECO:0000250" key="3">
    <source>
        <dbReference type="UniProtKB" id="Q9VDD3"/>
    </source>
</evidence>
<evidence type="ECO:0000255" key="4"/>
<evidence type="ECO:0000256" key="5">
    <source>
        <dbReference type="SAM" id="MobiDB-lite"/>
    </source>
</evidence>
<evidence type="ECO:0000305" key="6"/>
<evidence type="ECO:0000312" key="7">
    <source>
        <dbReference type="EMBL" id="EDW96231.1"/>
    </source>
</evidence>
<proteinExistence type="inferred from homology"/>